<reference key="1">
    <citation type="journal article" date="2008" name="PLoS ONE">
        <title>Comparative analysis of Acinetobacters: three genomes for three lifestyles.</title>
        <authorList>
            <person name="Vallenet D."/>
            <person name="Nordmann P."/>
            <person name="Barbe V."/>
            <person name="Poirel L."/>
            <person name="Mangenot S."/>
            <person name="Bataille E."/>
            <person name="Dossat C."/>
            <person name="Gas S."/>
            <person name="Kreimeyer A."/>
            <person name="Lenoble P."/>
            <person name="Oztas S."/>
            <person name="Poulain J."/>
            <person name="Segurens B."/>
            <person name="Robert C."/>
            <person name="Abergel C."/>
            <person name="Claverie J.-M."/>
            <person name="Raoult D."/>
            <person name="Medigue C."/>
            <person name="Weissenbach J."/>
            <person name="Cruveiller S."/>
        </authorList>
    </citation>
    <scope>NUCLEOTIDE SEQUENCE [LARGE SCALE GENOMIC DNA]</scope>
    <source>
        <strain>SDF</strain>
    </source>
</reference>
<accession>B0VUU0</accession>
<name>CCA_ACIBS</name>
<organism>
    <name type="scientific">Acinetobacter baumannii (strain SDF)</name>
    <dbReference type="NCBI Taxonomy" id="509170"/>
    <lineage>
        <taxon>Bacteria</taxon>
        <taxon>Pseudomonadati</taxon>
        <taxon>Pseudomonadota</taxon>
        <taxon>Gammaproteobacteria</taxon>
        <taxon>Moraxellales</taxon>
        <taxon>Moraxellaceae</taxon>
        <taxon>Acinetobacter</taxon>
        <taxon>Acinetobacter calcoaceticus/baumannii complex</taxon>
    </lineage>
</organism>
<keyword id="KW-0067">ATP-binding</keyword>
<keyword id="KW-0378">Hydrolase</keyword>
<keyword id="KW-0460">Magnesium</keyword>
<keyword id="KW-0479">Metal-binding</keyword>
<keyword id="KW-0511">Multifunctional enzyme</keyword>
<keyword id="KW-0533">Nickel</keyword>
<keyword id="KW-0547">Nucleotide-binding</keyword>
<keyword id="KW-0548">Nucleotidyltransferase</keyword>
<keyword id="KW-0692">RNA repair</keyword>
<keyword id="KW-0694">RNA-binding</keyword>
<keyword id="KW-0808">Transferase</keyword>
<keyword id="KW-0819">tRNA processing</keyword>
<comment type="function">
    <text evidence="1">Catalyzes the addition and repair of the essential 3'-terminal CCA sequence in tRNAs without using a nucleic acid template. Adds these three nucleotides in the order of C, C, and A to the tRNA nucleotide-73, using CTP and ATP as substrates and producing inorganic pyrophosphate. tRNA 3'-terminal CCA addition is required both for tRNA processing and repair. Also involved in tRNA surveillance by mediating tandem CCA addition to generate a CCACCA at the 3' terminus of unstable tRNAs. While stable tRNAs receive only 3'-terminal CCA, unstable tRNAs are marked with CCACCA and rapidly degraded.</text>
</comment>
<comment type="catalytic activity">
    <reaction evidence="1">
        <text>a tRNA precursor + 2 CTP + ATP = a tRNA with a 3' CCA end + 3 diphosphate</text>
        <dbReference type="Rhea" id="RHEA:14433"/>
        <dbReference type="Rhea" id="RHEA-COMP:10465"/>
        <dbReference type="Rhea" id="RHEA-COMP:10468"/>
        <dbReference type="ChEBI" id="CHEBI:30616"/>
        <dbReference type="ChEBI" id="CHEBI:33019"/>
        <dbReference type="ChEBI" id="CHEBI:37563"/>
        <dbReference type="ChEBI" id="CHEBI:74896"/>
        <dbReference type="ChEBI" id="CHEBI:83071"/>
        <dbReference type="EC" id="2.7.7.72"/>
    </reaction>
</comment>
<comment type="catalytic activity">
    <reaction evidence="1">
        <text>a tRNA with a 3' CCA end + 2 CTP + ATP = a tRNA with a 3' CCACCA end + 3 diphosphate</text>
        <dbReference type="Rhea" id="RHEA:76235"/>
        <dbReference type="Rhea" id="RHEA-COMP:10468"/>
        <dbReference type="Rhea" id="RHEA-COMP:18655"/>
        <dbReference type="ChEBI" id="CHEBI:30616"/>
        <dbReference type="ChEBI" id="CHEBI:33019"/>
        <dbReference type="ChEBI" id="CHEBI:37563"/>
        <dbReference type="ChEBI" id="CHEBI:83071"/>
        <dbReference type="ChEBI" id="CHEBI:195187"/>
    </reaction>
    <physiologicalReaction direction="left-to-right" evidence="1">
        <dbReference type="Rhea" id="RHEA:76236"/>
    </physiologicalReaction>
</comment>
<comment type="cofactor">
    <cofactor evidence="1">
        <name>Mg(2+)</name>
        <dbReference type="ChEBI" id="CHEBI:18420"/>
    </cofactor>
    <text evidence="1">Magnesium is required for nucleotidyltransferase activity.</text>
</comment>
<comment type="cofactor">
    <cofactor evidence="1">
        <name>Ni(2+)</name>
        <dbReference type="ChEBI" id="CHEBI:49786"/>
    </cofactor>
    <text evidence="1">Nickel for phosphatase activity.</text>
</comment>
<comment type="subunit">
    <text evidence="1">Monomer. Can also form homodimers and oligomers.</text>
</comment>
<comment type="domain">
    <text evidence="1">Comprises two domains: an N-terminal domain containing the nucleotidyltransferase activity and a C-terminal HD domain associated with both phosphodiesterase and phosphatase activities.</text>
</comment>
<comment type="miscellaneous">
    <text evidence="1">A single active site specifically recognizes both ATP and CTP and is responsible for their addition.</text>
</comment>
<comment type="similarity">
    <text evidence="1">Belongs to the tRNA nucleotidyltransferase/poly(A) polymerase family. Bacterial CCA-adding enzyme type 1 subfamily.</text>
</comment>
<protein>
    <recommendedName>
        <fullName evidence="1">Multifunctional CCA protein</fullName>
    </recommendedName>
    <domain>
        <recommendedName>
            <fullName evidence="1">CCA-adding enzyme</fullName>
            <ecNumber evidence="1">2.7.7.72</ecNumber>
        </recommendedName>
        <alternativeName>
            <fullName evidence="1">CCA tRNA nucleotidyltransferase</fullName>
        </alternativeName>
        <alternativeName>
            <fullName evidence="1">tRNA CCA-pyrophosphorylase</fullName>
        </alternativeName>
        <alternativeName>
            <fullName evidence="1">tRNA adenylyl-/cytidylyl-transferase</fullName>
        </alternativeName>
        <alternativeName>
            <fullName evidence="1">tRNA nucleotidyltransferase</fullName>
        </alternativeName>
        <alternativeName>
            <fullName evidence="1">tRNA-NT</fullName>
        </alternativeName>
    </domain>
    <domain>
        <recommendedName>
            <fullName evidence="1">2'-nucleotidase</fullName>
            <ecNumber evidence="1">3.1.3.-</ecNumber>
        </recommendedName>
    </domain>
    <domain>
        <recommendedName>
            <fullName evidence="1">2',3'-cyclic phosphodiesterase</fullName>
            <ecNumber evidence="1">3.1.4.-</ecNumber>
        </recommendedName>
    </domain>
    <domain>
        <recommendedName>
            <fullName evidence="1">Phosphatase</fullName>
            <ecNumber evidence="1">3.1.3.-</ecNumber>
        </recommendedName>
    </domain>
</protein>
<dbReference type="EC" id="2.7.7.72" evidence="1"/>
<dbReference type="EC" id="3.1.3.-" evidence="1"/>
<dbReference type="EC" id="3.1.4.-" evidence="1"/>
<dbReference type="EMBL" id="CU468230">
    <property type="protein sequence ID" value="CAP00532.1"/>
    <property type="molecule type" value="Genomic_DNA"/>
</dbReference>
<dbReference type="SMR" id="B0VUU0"/>
<dbReference type="KEGG" id="abm:ABSDF1182"/>
<dbReference type="HOGENOM" id="CLU_015961_1_1_6"/>
<dbReference type="Proteomes" id="UP000001741">
    <property type="component" value="Chromosome"/>
</dbReference>
<dbReference type="GO" id="GO:0005524">
    <property type="term" value="F:ATP binding"/>
    <property type="evidence" value="ECO:0007669"/>
    <property type="project" value="UniProtKB-UniRule"/>
</dbReference>
<dbReference type="GO" id="GO:0004810">
    <property type="term" value="F:CCA tRNA nucleotidyltransferase activity"/>
    <property type="evidence" value="ECO:0007669"/>
    <property type="project" value="UniProtKB-UniRule"/>
</dbReference>
<dbReference type="GO" id="GO:0004112">
    <property type="term" value="F:cyclic-nucleotide phosphodiesterase activity"/>
    <property type="evidence" value="ECO:0007669"/>
    <property type="project" value="UniProtKB-UniRule"/>
</dbReference>
<dbReference type="GO" id="GO:0000287">
    <property type="term" value="F:magnesium ion binding"/>
    <property type="evidence" value="ECO:0007669"/>
    <property type="project" value="UniProtKB-UniRule"/>
</dbReference>
<dbReference type="GO" id="GO:0016791">
    <property type="term" value="F:phosphatase activity"/>
    <property type="evidence" value="ECO:0007669"/>
    <property type="project" value="UniProtKB-UniRule"/>
</dbReference>
<dbReference type="GO" id="GO:0000049">
    <property type="term" value="F:tRNA binding"/>
    <property type="evidence" value="ECO:0007669"/>
    <property type="project" value="UniProtKB-UniRule"/>
</dbReference>
<dbReference type="GO" id="GO:0042245">
    <property type="term" value="P:RNA repair"/>
    <property type="evidence" value="ECO:0007669"/>
    <property type="project" value="UniProtKB-KW"/>
</dbReference>
<dbReference type="GO" id="GO:0001680">
    <property type="term" value="P:tRNA 3'-terminal CCA addition"/>
    <property type="evidence" value="ECO:0007669"/>
    <property type="project" value="UniProtKB-UniRule"/>
</dbReference>
<dbReference type="CDD" id="cd00077">
    <property type="entry name" value="HDc"/>
    <property type="match status" value="1"/>
</dbReference>
<dbReference type="CDD" id="cd05398">
    <property type="entry name" value="NT_ClassII-CCAase"/>
    <property type="match status" value="1"/>
</dbReference>
<dbReference type="Gene3D" id="3.30.460.10">
    <property type="entry name" value="Beta Polymerase, domain 2"/>
    <property type="match status" value="1"/>
</dbReference>
<dbReference type="Gene3D" id="1.10.3090.10">
    <property type="entry name" value="cca-adding enzyme, domain 2"/>
    <property type="match status" value="1"/>
</dbReference>
<dbReference type="HAMAP" id="MF_01261">
    <property type="entry name" value="CCA_bact_type1"/>
    <property type="match status" value="1"/>
</dbReference>
<dbReference type="HAMAP" id="MF_01262">
    <property type="entry name" value="CCA_bact_type2"/>
    <property type="match status" value="1"/>
</dbReference>
<dbReference type="InterPro" id="IPR012006">
    <property type="entry name" value="CCA_bact"/>
</dbReference>
<dbReference type="InterPro" id="IPR003607">
    <property type="entry name" value="HD/PDEase_dom"/>
</dbReference>
<dbReference type="InterPro" id="IPR006674">
    <property type="entry name" value="HD_domain"/>
</dbReference>
<dbReference type="InterPro" id="IPR043519">
    <property type="entry name" value="NT_sf"/>
</dbReference>
<dbReference type="InterPro" id="IPR002646">
    <property type="entry name" value="PolA_pol_head_dom"/>
</dbReference>
<dbReference type="InterPro" id="IPR032828">
    <property type="entry name" value="PolyA_RNA-bd"/>
</dbReference>
<dbReference type="InterPro" id="IPR050124">
    <property type="entry name" value="tRNA_CCA-adding_enzyme"/>
</dbReference>
<dbReference type="NCBIfam" id="NF008137">
    <property type="entry name" value="PRK10885.1"/>
    <property type="match status" value="1"/>
</dbReference>
<dbReference type="PANTHER" id="PTHR47545">
    <property type="entry name" value="MULTIFUNCTIONAL CCA PROTEIN"/>
    <property type="match status" value="1"/>
</dbReference>
<dbReference type="PANTHER" id="PTHR47545:SF1">
    <property type="entry name" value="MULTIFUNCTIONAL CCA PROTEIN"/>
    <property type="match status" value="1"/>
</dbReference>
<dbReference type="Pfam" id="PF01966">
    <property type="entry name" value="HD"/>
    <property type="match status" value="1"/>
</dbReference>
<dbReference type="Pfam" id="PF01743">
    <property type="entry name" value="PolyA_pol"/>
    <property type="match status" value="1"/>
</dbReference>
<dbReference type="Pfam" id="PF12627">
    <property type="entry name" value="PolyA_pol_RNAbd"/>
    <property type="match status" value="1"/>
</dbReference>
<dbReference type="PIRSF" id="PIRSF000813">
    <property type="entry name" value="CCA_bact"/>
    <property type="match status" value="1"/>
</dbReference>
<dbReference type="SUPFAM" id="SSF81301">
    <property type="entry name" value="Nucleotidyltransferase"/>
    <property type="match status" value="1"/>
</dbReference>
<dbReference type="SUPFAM" id="SSF81891">
    <property type="entry name" value="Poly A polymerase C-terminal region-like"/>
    <property type="match status" value="1"/>
</dbReference>
<dbReference type="PROSITE" id="PS51831">
    <property type="entry name" value="HD"/>
    <property type="match status" value="1"/>
</dbReference>
<feature type="chain" id="PRO_1000140018" description="Multifunctional CCA protein">
    <location>
        <begin position="1"/>
        <end position="412"/>
    </location>
</feature>
<feature type="domain" description="HD" evidence="1">
    <location>
        <begin position="228"/>
        <end position="329"/>
    </location>
</feature>
<feature type="binding site" evidence="1">
    <location>
        <position position="8"/>
    </location>
    <ligand>
        <name>ATP</name>
        <dbReference type="ChEBI" id="CHEBI:30616"/>
    </ligand>
</feature>
<feature type="binding site" evidence="1">
    <location>
        <position position="8"/>
    </location>
    <ligand>
        <name>CTP</name>
        <dbReference type="ChEBI" id="CHEBI:37563"/>
    </ligand>
</feature>
<feature type="binding site" evidence="1">
    <location>
        <position position="11"/>
    </location>
    <ligand>
        <name>ATP</name>
        <dbReference type="ChEBI" id="CHEBI:30616"/>
    </ligand>
</feature>
<feature type="binding site" evidence="1">
    <location>
        <position position="11"/>
    </location>
    <ligand>
        <name>CTP</name>
        <dbReference type="ChEBI" id="CHEBI:37563"/>
    </ligand>
</feature>
<feature type="binding site" evidence="1">
    <location>
        <position position="21"/>
    </location>
    <ligand>
        <name>Mg(2+)</name>
        <dbReference type="ChEBI" id="CHEBI:18420"/>
    </ligand>
</feature>
<feature type="binding site" evidence="1">
    <location>
        <position position="23"/>
    </location>
    <ligand>
        <name>Mg(2+)</name>
        <dbReference type="ChEBI" id="CHEBI:18420"/>
    </ligand>
</feature>
<feature type="binding site" evidence="1">
    <location>
        <position position="91"/>
    </location>
    <ligand>
        <name>ATP</name>
        <dbReference type="ChEBI" id="CHEBI:30616"/>
    </ligand>
</feature>
<feature type="binding site" evidence="1">
    <location>
        <position position="91"/>
    </location>
    <ligand>
        <name>CTP</name>
        <dbReference type="ChEBI" id="CHEBI:37563"/>
    </ligand>
</feature>
<feature type="binding site" evidence="1">
    <location>
        <position position="137"/>
    </location>
    <ligand>
        <name>ATP</name>
        <dbReference type="ChEBI" id="CHEBI:30616"/>
    </ligand>
</feature>
<feature type="binding site" evidence="1">
    <location>
        <position position="137"/>
    </location>
    <ligand>
        <name>CTP</name>
        <dbReference type="ChEBI" id="CHEBI:37563"/>
    </ligand>
</feature>
<feature type="binding site" evidence="1">
    <location>
        <position position="140"/>
    </location>
    <ligand>
        <name>ATP</name>
        <dbReference type="ChEBI" id="CHEBI:30616"/>
    </ligand>
</feature>
<feature type="binding site" evidence="1">
    <location>
        <position position="140"/>
    </location>
    <ligand>
        <name>CTP</name>
        <dbReference type="ChEBI" id="CHEBI:37563"/>
    </ligand>
</feature>
<proteinExistence type="inferred from homology"/>
<sequence>MQVYLVGGAVRDYLLGHSYQEKDYVVVGATPEHMLAQGFQPVGKDFPVFLHPETKEEYALARTERKSGQGYHGFQFFTDTTVSLEDDLIRRDLTINAIAMDQDGKIYDPYGGQNDLENKILRHVSEAFAEDPLRVLRVARFAARYFPYGFQIAPETLQLMQTMADSGELDALTPERVWKETSRALMENHADIYFQTLRDCGALKHLFPEIDALFGVPQRPEYHPEVDCGIHTLMSLQQACKSNYSLDVRFAVLVHDLGKALTPAKELPRHIMHEERGIKPVTQLCERLRVPTQTKQLALSVCKEHLKCHQIMSLKPGTLWRLLQRLDVLRRPERVEAFVQACECDAKGRLGLEDRPYPQAQYMREAMQIVRSIKVQDLPENIKGAEIGEMLIQYRIEALAEFKNQHQSLSHS</sequence>
<gene>
    <name evidence="1" type="primary">cca</name>
    <name type="ordered locus">ABSDF1182</name>
</gene>
<evidence type="ECO:0000255" key="1">
    <source>
        <dbReference type="HAMAP-Rule" id="MF_01261"/>
    </source>
</evidence>